<organism>
    <name type="scientific">Pelobacter acidigallici</name>
    <dbReference type="NCBI Taxonomy" id="35816"/>
    <lineage>
        <taxon>Bacteria</taxon>
        <taxon>Pseudomonadati</taxon>
        <taxon>Thermodesulfobacteriota</taxon>
        <taxon>Desulfuromonadia</taxon>
        <taxon>Desulfuromonadales</taxon>
        <taxon>Desulfuromonadaceae</taxon>
        <taxon>Pelobacter</taxon>
    </lineage>
</organism>
<name>PGTS_PELAC</name>
<proteinExistence type="evidence at protein level"/>
<protein>
    <recommendedName>
        <fullName>Pyrogallol hydroxytransferase small subunit</fullName>
        <ecNumber>1.97.1.2</ecNumber>
    </recommendedName>
    <alternativeName>
        <fullName>Transhydroxylase subunit beta</fullName>
    </alternativeName>
</protein>
<gene>
    <name type="primary">bthL</name>
</gene>
<reference key="1">
    <citation type="submission" date="1999-07" db="EMBL/GenBank/DDBJ databases">
        <authorList>
            <person name="Retey J."/>
        </authorList>
    </citation>
    <scope>NUCLEOTIDE SEQUENCE [GENOMIC DNA]</scope>
</reference>
<reference key="2">
    <citation type="journal article" date="1996" name="Eur. J. Biochem.">
        <title>One molecule of molybdopterin guanine dinucleotide is associated with each subunit of the heterodimeric Mo-Fe-S protein transhydroxylase of Pelobacter acidigallici as determined by SDS/PAGE and mass spectrometry.</title>
        <authorList>
            <person name="Reichenbecher W."/>
            <person name="Ruediger A."/>
            <person name="Kroneck P.M.H."/>
            <person name="Schink B."/>
        </authorList>
    </citation>
    <scope>PROTEIN SEQUENCE OF 1-15</scope>
    <source>
        <strain>ATCC 49970 / DSM 2377 / Ma Gal2 / Braunschweig</strain>
    </source>
</reference>
<reference key="3">
    <citation type="journal article" date="1999" name="Biochim. Biophys. Acta">
        <title>Towards the reaction mechanism of pyrogallol-phloroglucinol transhydroxylase of Pelobacter acidigallici.</title>
        <authorList>
            <person name="Reichenbecher W."/>
            <person name="Schink B."/>
        </authorList>
    </citation>
    <scope>CHARACTERIZATION</scope>
</reference>
<feature type="chain" id="PRO_0000058366" description="Pyrogallol hydroxytransferase small subunit">
    <location>
        <begin position="1"/>
        <end position="274"/>
    </location>
</feature>
<feature type="binding site" evidence="1">
    <location>
        <position position="13"/>
    </location>
    <ligand>
        <name>[4Fe-4S] cluster</name>
        <dbReference type="ChEBI" id="CHEBI:49883"/>
        <label>1</label>
    </ligand>
</feature>
<feature type="binding site" evidence="1">
    <location>
        <position position="16"/>
    </location>
    <ligand>
        <name>[4Fe-4S] cluster</name>
        <dbReference type="ChEBI" id="CHEBI:49883"/>
        <label>1</label>
    </ligand>
</feature>
<feature type="binding site" evidence="1">
    <location>
        <position position="19"/>
    </location>
    <ligand>
        <name>[4Fe-4S] cluster</name>
        <dbReference type="ChEBI" id="CHEBI:49883"/>
        <label>1</label>
    </ligand>
</feature>
<feature type="binding site" evidence="1">
    <location>
        <position position="23"/>
    </location>
    <ligand>
        <name>[4Fe-4S] cluster</name>
        <dbReference type="ChEBI" id="CHEBI:49883"/>
        <label>2</label>
    </ligand>
</feature>
<feature type="binding site" evidence="1">
    <location>
        <position position="68"/>
    </location>
    <ligand>
        <name>[4Fe-4S] cluster</name>
        <dbReference type="ChEBI" id="CHEBI:49883"/>
        <label>3</label>
    </ligand>
</feature>
<feature type="binding site" evidence="1">
    <location>
        <position position="71"/>
    </location>
    <ligand>
        <name>[4Fe-4S] cluster</name>
        <dbReference type="ChEBI" id="CHEBI:49883"/>
        <label>3</label>
    </ligand>
</feature>
<feature type="binding site" evidence="1">
    <location>
        <position position="76"/>
    </location>
    <ligand>
        <name>[4Fe-4S] cluster</name>
        <dbReference type="ChEBI" id="CHEBI:49883"/>
        <label>3</label>
    </ligand>
</feature>
<feature type="binding site" evidence="1">
    <location>
        <position position="109"/>
    </location>
    <ligand>
        <name>[4Fe-4S] cluster</name>
        <dbReference type="ChEBI" id="CHEBI:49883"/>
        <label>3</label>
    </ligand>
</feature>
<feature type="binding site" evidence="1">
    <location>
        <position position="126"/>
    </location>
    <ligand>
        <name>[4Fe-4S] cluster</name>
        <dbReference type="ChEBI" id="CHEBI:49883"/>
        <label>2</label>
    </ligand>
</feature>
<feature type="binding site" evidence="1">
    <location>
        <position position="129"/>
    </location>
    <ligand>
        <name>[4Fe-4S] cluster</name>
        <dbReference type="ChEBI" id="CHEBI:49883"/>
        <label>2</label>
    </ligand>
</feature>
<feature type="binding site" evidence="1">
    <location>
        <position position="145"/>
    </location>
    <ligand>
        <name>[4Fe-4S] cluster</name>
        <dbReference type="ChEBI" id="CHEBI:49883"/>
        <label>2</label>
    </ligand>
</feature>
<feature type="binding site" evidence="1">
    <location>
        <position position="149"/>
    </location>
    <ligand>
        <name>[4Fe-4S] cluster</name>
        <dbReference type="ChEBI" id="CHEBI:49883"/>
        <label>1</label>
    </ligand>
</feature>
<feature type="strand" evidence="2">
    <location>
        <begin position="3"/>
        <end position="9"/>
    </location>
</feature>
<feature type="helix" evidence="2">
    <location>
        <begin position="10"/>
        <end position="12"/>
    </location>
</feature>
<feature type="helix" evidence="2">
    <location>
        <begin position="18"/>
        <end position="27"/>
    </location>
</feature>
<feature type="turn" evidence="2">
    <location>
        <begin position="33"/>
        <end position="35"/>
    </location>
</feature>
<feature type="strand" evidence="2">
    <location>
        <begin position="45"/>
        <end position="54"/>
    </location>
</feature>
<feature type="strand" evidence="2">
    <location>
        <begin position="60"/>
        <end position="66"/>
    </location>
</feature>
<feature type="helix" evidence="2">
    <location>
        <begin position="75"/>
        <end position="79"/>
    </location>
</feature>
<feature type="turn" evidence="2">
    <location>
        <begin position="80"/>
        <end position="82"/>
    </location>
</feature>
<feature type="strand" evidence="2">
    <location>
        <begin position="83"/>
        <end position="86"/>
    </location>
</feature>
<feature type="strand" evidence="2">
    <location>
        <begin position="92"/>
        <end position="94"/>
    </location>
</feature>
<feature type="turn" evidence="2">
    <location>
        <begin position="96"/>
        <end position="101"/>
    </location>
</feature>
<feature type="helix" evidence="2">
    <location>
        <begin position="103"/>
        <end position="108"/>
    </location>
</feature>
<feature type="strand" evidence="2">
    <location>
        <begin position="115"/>
        <end position="117"/>
    </location>
</feature>
<feature type="turn" evidence="2">
    <location>
        <begin position="118"/>
        <end position="121"/>
    </location>
</feature>
<feature type="strand" evidence="2">
    <location>
        <begin position="122"/>
        <end position="124"/>
    </location>
</feature>
<feature type="helix" evidence="2">
    <location>
        <begin position="130"/>
        <end position="133"/>
    </location>
</feature>
<feature type="helix" evidence="2">
    <location>
        <begin position="144"/>
        <end position="148"/>
    </location>
</feature>
<feature type="strand" evidence="2">
    <location>
        <begin position="154"/>
        <end position="159"/>
    </location>
</feature>
<feature type="helix" evidence="2">
    <location>
        <begin position="161"/>
        <end position="171"/>
    </location>
</feature>
<feature type="helix" evidence="2">
    <location>
        <begin position="178"/>
        <end position="180"/>
    </location>
</feature>
<feature type="strand" evidence="2">
    <location>
        <begin position="185"/>
        <end position="190"/>
    </location>
</feature>
<feature type="helix" evidence="2">
    <location>
        <begin position="192"/>
        <end position="195"/>
    </location>
</feature>
<feature type="strand" evidence="2">
    <location>
        <begin position="197"/>
        <end position="205"/>
    </location>
</feature>
<feature type="strand" evidence="2">
    <location>
        <begin position="214"/>
        <end position="219"/>
    </location>
</feature>
<feature type="strand" evidence="2">
    <location>
        <begin position="222"/>
        <end position="228"/>
    </location>
</feature>
<feature type="strand" evidence="2">
    <location>
        <begin position="233"/>
        <end position="240"/>
    </location>
</feature>
<feature type="strand" evidence="2">
    <location>
        <begin position="242"/>
        <end position="251"/>
    </location>
</feature>
<feature type="strand" evidence="2">
    <location>
        <begin position="254"/>
        <end position="265"/>
    </location>
</feature>
<feature type="strand" evidence="2">
    <location>
        <begin position="267"/>
        <end position="274"/>
    </location>
</feature>
<evidence type="ECO:0000250" key="1"/>
<evidence type="ECO:0007829" key="2">
    <source>
        <dbReference type="PDB" id="4V4E"/>
    </source>
</evidence>
<accession>P80564</accession>
<accession>Q9XAY5</accession>
<sequence>MEQYYMVIDVAKCQDCNNCFMGCMDEHELNEWPGYTASMQRGHRWMNIERRERGTYPRNDINYRPTPCMHCENAPCVAKGNGAVYQREDGIVLIDPEKAKGKKELLDTCPYGVMYWNEEENVAQKCTMCAHLLDDESWAPKMPRCAHNCGSFVYEFLKTTPEAMAKKVEEEGLEVIKPELGTKPRVYYKNLYRFEKNYVTAGILVQGDCFEGAKVVLKSGGKEVASAETNFFGEFKFDALDNGEYTVEIDADGKSYSDTVVIDDKSVDLGFIKL</sequence>
<keyword id="KW-0002">3D-structure</keyword>
<keyword id="KW-0004">4Fe-4S</keyword>
<keyword id="KW-0903">Direct protein sequencing</keyword>
<keyword id="KW-0408">Iron</keyword>
<keyword id="KW-0411">Iron-sulfur</keyword>
<keyword id="KW-0479">Metal-binding</keyword>
<keyword id="KW-0560">Oxidoreductase</keyword>
<dbReference type="EC" id="1.97.1.2"/>
<dbReference type="EMBL" id="AJ243850">
    <property type="protein sequence ID" value="CAB50914.1"/>
    <property type="molecule type" value="Genomic_DNA"/>
</dbReference>
<dbReference type="PIR" id="S65429">
    <property type="entry name" value="S65429"/>
</dbReference>
<dbReference type="PDB" id="4V4C">
    <property type="method" value="X-ray"/>
    <property type="resolution" value="2.35 A"/>
    <property type="chains" value="B/D/F/H/J/L/N/P/R/T/V/X=1-274"/>
</dbReference>
<dbReference type="PDB" id="4V4D">
    <property type="method" value="X-ray"/>
    <property type="resolution" value="2.20 A"/>
    <property type="chains" value="B/D/F/H/J/L/N/P/R/T/V/X=1-274"/>
</dbReference>
<dbReference type="PDB" id="4V4E">
    <property type="method" value="X-ray"/>
    <property type="resolution" value="2.00 A"/>
    <property type="chains" value="B/D/F/H/J/L/N/P/R/T/V/X=1-274"/>
</dbReference>
<dbReference type="PDBsum" id="4V4C"/>
<dbReference type="PDBsum" id="4V4D"/>
<dbReference type="PDBsum" id="4V4E"/>
<dbReference type="SMR" id="P80564"/>
<dbReference type="TCDB" id="5.A.3.7.1">
    <property type="family name" value="the prokaryotic molybdopterin-containing oxidoreductase (pmo) family"/>
</dbReference>
<dbReference type="BRENDA" id="1.97.1.2">
    <property type="organism ID" value="4585"/>
</dbReference>
<dbReference type="GO" id="GO:0051539">
    <property type="term" value="F:4 iron, 4 sulfur cluster binding"/>
    <property type="evidence" value="ECO:0007669"/>
    <property type="project" value="UniProtKB-KW"/>
</dbReference>
<dbReference type="GO" id="GO:0046872">
    <property type="term" value="F:metal ion binding"/>
    <property type="evidence" value="ECO:0007669"/>
    <property type="project" value="UniProtKB-KW"/>
</dbReference>
<dbReference type="GO" id="GO:0018706">
    <property type="term" value="F:pyrogallol hydroxytransferase activity"/>
    <property type="evidence" value="ECO:0007669"/>
    <property type="project" value="UniProtKB-EC"/>
</dbReference>
<dbReference type="CDD" id="cd10552">
    <property type="entry name" value="TH_beta_N"/>
    <property type="match status" value="1"/>
</dbReference>
<dbReference type="Gene3D" id="3.30.70.20">
    <property type="match status" value="2"/>
</dbReference>
<dbReference type="Gene3D" id="2.60.40.10">
    <property type="entry name" value="Immunoglobulins"/>
    <property type="match status" value="1"/>
</dbReference>
<dbReference type="InterPro" id="IPR017896">
    <property type="entry name" value="4Fe4S_Fe-S-bd"/>
</dbReference>
<dbReference type="InterPro" id="IPR050954">
    <property type="entry name" value="ET_IronSulfur_Cluster-Binding"/>
</dbReference>
<dbReference type="InterPro" id="IPR013783">
    <property type="entry name" value="Ig-like_fold"/>
</dbReference>
<dbReference type="PANTHER" id="PTHR43177">
    <property type="entry name" value="PROTEIN NRFC"/>
    <property type="match status" value="1"/>
</dbReference>
<dbReference type="PANTHER" id="PTHR43177:SF3">
    <property type="entry name" value="PROTEIN NRFC HOMOLOG"/>
    <property type="match status" value="1"/>
</dbReference>
<dbReference type="Pfam" id="PF13247">
    <property type="entry name" value="Fer4_11"/>
    <property type="match status" value="1"/>
</dbReference>
<dbReference type="SUPFAM" id="SSF54862">
    <property type="entry name" value="4Fe-4S ferredoxins"/>
    <property type="match status" value="1"/>
</dbReference>
<dbReference type="SUPFAM" id="SSF49478">
    <property type="entry name" value="Cna protein B-type domain"/>
    <property type="match status" value="1"/>
</dbReference>
<comment type="function">
    <text>Isomerization of pyrogallol to phloroglucin.</text>
</comment>
<comment type="catalytic activity">
    <reaction>
        <text>1,2,3,5-tetrahydroxybenzene + 1,2,3-trihydroxybenzene = 1,2,3,5-tetrahydroxybenzene + 1,3,5-trihydroxybenzene</text>
        <dbReference type="Rhea" id="RHEA:21000"/>
        <dbReference type="ChEBI" id="CHEBI:16164"/>
        <dbReference type="ChEBI" id="CHEBI:16204"/>
        <dbReference type="ChEBI" id="CHEBI:16746"/>
        <dbReference type="EC" id="1.97.1.2"/>
    </reaction>
</comment>
<comment type="cofactor">
    <cofactor>
        <name>[4Fe-4S] cluster</name>
        <dbReference type="ChEBI" id="CHEBI:49883"/>
    </cofactor>
    <text>Binds 3 [4Fe-4S] clusters.</text>
</comment>
<comment type="subunit">
    <text>Heterodimer of a large and a small subunit.</text>
</comment>